<protein>
    <recommendedName>
        <fullName evidence="1">Light-independent protochlorophyllide reductase iron-sulfur ATP-binding protein</fullName>
        <shortName evidence="1">DPOR subunit L</shortName>
        <shortName evidence="1">LI-POR subunit L</shortName>
        <ecNumber evidence="1">1.3.7.7</ecNumber>
    </recommendedName>
</protein>
<comment type="function">
    <text evidence="1">Component of the dark-operative protochlorophyllide reductase (DPOR) that uses Mg-ATP and reduced ferredoxin to reduce ring D of protochlorophyllide (Pchlide) to form chlorophyllide a (Chlide). This reaction is light-independent. The L component serves as a unique electron donor to the NB-component of the complex, and binds Mg-ATP.</text>
</comment>
<comment type="catalytic activity">
    <reaction evidence="1">
        <text>chlorophyllide a + oxidized 2[4Fe-4S]-[ferredoxin] + 2 ADP + 2 phosphate = protochlorophyllide a + reduced 2[4Fe-4S]-[ferredoxin] + 2 ATP + 2 H2O</text>
        <dbReference type="Rhea" id="RHEA:28202"/>
        <dbReference type="Rhea" id="RHEA-COMP:10002"/>
        <dbReference type="Rhea" id="RHEA-COMP:10004"/>
        <dbReference type="ChEBI" id="CHEBI:15377"/>
        <dbReference type="ChEBI" id="CHEBI:30616"/>
        <dbReference type="ChEBI" id="CHEBI:33722"/>
        <dbReference type="ChEBI" id="CHEBI:33723"/>
        <dbReference type="ChEBI" id="CHEBI:43474"/>
        <dbReference type="ChEBI" id="CHEBI:83348"/>
        <dbReference type="ChEBI" id="CHEBI:83350"/>
        <dbReference type="ChEBI" id="CHEBI:456216"/>
        <dbReference type="EC" id="1.3.7.7"/>
    </reaction>
</comment>
<comment type="cofactor">
    <cofactor evidence="1">
        <name>[4Fe-4S] cluster</name>
        <dbReference type="ChEBI" id="CHEBI:49883"/>
    </cofactor>
    <text evidence="1">Binds 1 [4Fe-4S] cluster per dimer.</text>
</comment>
<comment type="pathway">
    <text evidence="1">Porphyrin-containing compound metabolism; bacteriochlorophyll biosynthesis (light-independent).</text>
</comment>
<comment type="subunit">
    <text evidence="1">Homodimer. Protochlorophyllide reductase is composed of three subunits; BchL, BchN and BchB.</text>
</comment>
<comment type="similarity">
    <text evidence="1">Belongs to the NifH/BchL/ChlL family.</text>
</comment>
<organism>
    <name type="scientific">Chloroflexus aurantiacus (strain ATCC 29364 / DSM 637 / Y-400-fl)</name>
    <dbReference type="NCBI Taxonomy" id="480224"/>
    <lineage>
        <taxon>Bacteria</taxon>
        <taxon>Bacillati</taxon>
        <taxon>Chloroflexota</taxon>
        <taxon>Chloroflexia</taxon>
        <taxon>Chloroflexales</taxon>
        <taxon>Chloroflexineae</taxon>
        <taxon>Chloroflexaceae</taxon>
        <taxon>Chloroflexus</taxon>
    </lineage>
</organism>
<dbReference type="EC" id="1.3.7.7" evidence="1"/>
<dbReference type="EMBL" id="CP001364">
    <property type="protein sequence ID" value="ACM54147.1"/>
    <property type="molecule type" value="Genomic_DNA"/>
</dbReference>
<dbReference type="SMR" id="B9LKM2"/>
<dbReference type="KEGG" id="chl:Chy400_2758"/>
<dbReference type="HOGENOM" id="CLU_059373_2_0_0"/>
<dbReference type="OrthoDB" id="9778641at2"/>
<dbReference type="UniPathway" id="UPA00671"/>
<dbReference type="GO" id="GO:0051539">
    <property type="term" value="F:4 iron, 4 sulfur cluster binding"/>
    <property type="evidence" value="ECO:0007669"/>
    <property type="project" value="UniProtKB-UniRule"/>
</dbReference>
<dbReference type="GO" id="GO:0005524">
    <property type="term" value="F:ATP binding"/>
    <property type="evidence" value="ECO:0007669"/>
    <property type="project" value="UniProtKB-UniRule"/>
</dbReference>
<dbReference type="GO" id="GO:0046872">
    <property type="term" value="F:metal ion binding"/>
    <property type="evidence" value="ECO:0007669"/>
    <property type="project" value="UniProtKB-KW"/>
</dbReference>
<dbReference type="GO" id="GO:0016730">
    <property type="term" value="F:oxidoreductase activity, acting on iron-sulfur proteins as donors"/>
    <property type="evidence" value="ECO:0007669"/>
    <property type="project" value="InterPro"/>
</dbReference>
<dbReference type="GO" id="GO:0016636">
    <property type="term" value="F:oxidoreductase activity, acting on the CH-CH group of donors, iron-sulfur protein as acceptor"/>
    <property type="evidence" value="ECO:0007669"/>
    <property type="project" value="UniProtKB-UniRule"/>
</dbReference>
<dbReference type="GO" id="GO:0036070">
    <property type="term" value="P:light-independent bacteriochlorophyll biosynthetic process"/>
    <property type="evidence" value="ECO:0007669"/>
    <property type="project" value="UniProtKB-UniRule"/>
</dbReference>
<dbReference type="GO" id="GO:0019685">
    <property type="term" value="P:photosynthesis, dark reaction"/>
    <property type="evidence" value="ECO:0007669"/>
    <property type="project" value="InterPro"/>
</dbReference>
<dbReference type="CDD" id="cd02032">
    <property type="entry name" value="Bchl-like"/>
    <property type="match status" value="1"/>
</dbReference>
<dbReference type="Gene3D" id="3.40.50.300">
    <property type="entry name" value="P-loop containing nucleotide triphosphate hydrolases"/>
    <property type="match status" value="1"/>
</dbReference>
<dbReference type="HAMAP" id="MF_00355">
    <property type="entry name" value="ChlL_BchL"/>
    <property type="match status" value="1"/>
</dbReference>
<dbReference type="InterPro" id="IPR030655">
    <property type="entry name" value="NifH/chlL_CS"/>
</dbReference>
<dbReference type="InterPro" id="IPR000392">
    <property type="entry name" value="NifH/frxC"/>
</dbReference>
<dbReference type="InterPro" id="IPR027417">
    <property type="entry name" value="P-loop_NTPase"/>
</dbReference>
<dbReference type="InterPro" id="IPR005971">
    <property type="entry name" value="Protochlorophyllide_ATP-bd"/>
</dbReference>
<dbReference type="NCBIfam" id="TIGR01281">
    <property type="entry name" value="DPOR_bchL"/>
    <property type="match status" value="1"/>
</dbReference>
<dbReference type="PANTHER" id="PTHR42864">
    <property type="entry name" value="LIGHT-INDEPENDENT PROTOCHLOROPHYLLIDE REDUCTASE IRON-SULFUR ATP-BINDING PROTEIN"/>
    <property type="match status" value="1"/>
</dbReference>
<dbReference type="PANTHER" id="PTHR42864:SF2">
    <property type="entry name" value="LIGHT-INDEPENDENT PROTOCHLOROPHYLLIDE REDUCTASE IRON-SULFUR ATP-BINDING PROTEIN"/>
    <property type="match status" value="1"/>
</dbReference>
<dbReference type="Pfam" id="PF00142">
    <property type="entry name" value="Fer4_NifH"/>
    <property type="match status" value="1"/>
</dbReference>
<dbReference type="PIRSF" id="PIRSF000363">
    <property type="entry name" value="Nitrogenase_iron"/>
    <property type="match status" value="1"/>
</dbReference>
<dbReference type="PRINTS" id="PR00091">
    <property type="entry name" value="NITROGNASEII"/>
</dbReference>
<dbReference type="SUPFAM" id="SSF52540">
    <property type="entry name" value="P-loop containing nucleoside triphosphate hydrolases"/>
    <property type="match status" value="1"/>
</dbReference>
<dbReference type="PROSITE" id="PS00746">
    <property type="entry name" value="NIFH_FRXC_1"/>
    <property type="match status" value="1"/>
</dbReference>
<dbReference type="PROSITE" id="PS00692">
    <property type="entry name" value="NIFH_FRXC_2"/>
    <property type="match status" value="1"/>
</dbReference>
<dbReference type="PROSITE" id="PS51026">
    <property type="entry name" value="NIFH_FRXC_3"/>
    <property type="match status" value="1"/>
</dbReference>
<name>BCHL_CHLSY</name>
<sequence>MSLILAIYGKGGIGKSTTSANLSAAMALKGAKVLQIGCDPKHDSTFPLTGHLQPTVIDVLDSVNFHLEDVSKEDVIRTGFAGVDTLESGGPPAGSGCGGYVVGETVKLLKEFGLYDKYDVIVFDVLGDVVCGGFSAPLNYADYGLIIACNDFDSIFAANRLCLAISQKSQRHKVKLAGIIANRVDYEYGGGTNLLDQFAEKVGTKVIGRVPYHDLIRRSRLAGKTLFEMEGPGKEECTRPFEEMAEYLLAQPQATVPQPYHDRAIFEAIGGWR</sequence>
<keyword id="KW-0004">4Fe-4S</keyword>
<keyword id="KW-0067">ATP-binding</keyword>
<keyword id="KW-0077">Bacteriochlorophyll biosynthesis</keyword>
<keyword id="KW-0149">Chlorophyll biosynthesis</keyword>
<keyword id="KW-0408">Iron</keyword>
<keyword id="KW-0411">Iron-sulfur</keyword>
<keyword id="KW-0460">Magnesium</keyword>
<keyword id="KW-0479">Metal-binding</keyword>
<keyword id="KW-0547">Nucleotide-binding</keyword>
<keyword id="KW-0560">Oxidoreductase</keyword>
<keyword id="KW-0602">Photosynthesis</keyword>
<feature type="chain" id="PRO_1000133436" description="Light-independent protochlorophyllide reductase iron-sulfur ATP-binding protein">
    <location>
        <begin position="1"/>
        <end position="273"/>
    </location>
</feature>
<feature type="binding site" evidence="1">
    <location>
        <begin position="12"/>
        <end position="17"/>
    </location>
    <ligand>
        <name>ATP</name>
        <dbReference type="ChEBI" id="CHEBI:30616"/>
    </ligand>
</feature>
<feature type="binding site" evidence="1">
    <location>
        <position position="16"/>
    </location>
    <ligand>
        <name>Mg(2+)</name>
        <dbReference type="ChEBI" id="CHEBI:18420"/>
    </ligand>
</feature>
<feature type="binding site" evidence="1">
    <location>
        <position position="41"/>
    </location>
    <ligand>
        <name>ATP</name>
        <dbReference type="ChEBI" id="CHEBI:30616"/>
    </ligand>
</feature>
<feature type="binding site" evidence="1">
    <location>
        <position position="97"/>
    </location>
    <ligand>
        <name>[4Fe-4S] cluster</name>
        <dbReference type="ChEBI" id="CHEBI:49883"/>
        <note>ligand shared between dimeric partners</note>
    </ligand>
</feature>
<feature type="binding site" evidence="1">
    <location>
        <position position="131"/>
    </location>
    <ligand>
        <name>[4Fe-4S] cluster</name>
        <dbReference type="ChEBI" id="CHEBI:49883"/>
        <note>ligand shared between dimeric partners</note>
    </ligand>
</feature>
<feature type="binding site" evidence="1">
    <location>
        <begin position="182"/>
        <end position="183"/>
    </location>
    <ligand>
        <name>ATP</name>
        <dbReference type="ChEBI" id="CHEBI:30616"/>
    </ligand>
</feature>
<gene>
    <name evidence="1" type="primary">bchL</name>
    <name type="ordered locus">Chy400_2758</name>
</gene>
<evidence type="ECO:0000255" key="1">
    <source>
        <dbReference type="HAMAP-Rule" id="MF_00355"/>
    </source>
</evidence>
<proteinExistence type="inferred from homology"/>
<accession>B9LKM2</accession>
<reference key="1">
    <citation type="submission" date="2009-01" db="EMBL/GenBank/DDBJ databases">
        <title>Complete sequence of Chloroflexus sp. Y-400-fl.</title>
        <authorList>
            <consortium name="US DOE Joint Genome Institute"/>
            <person name="Lucas S."/>
            <person name="Copeland A."/>
            <person name="Lapidus A."/>
            <person name="Glavina del Rio T."/>
            <person name="Dalin E."/>
            <person name="Tice H."/>
            <person name="Bruce D."/>
            <person name="Goodwin L."/>
            <person name="Pitluck S."/>
            <person name="Sims D."/>
            <person name="Kiss H."/>
            <person name="Brettin T."/>
            <person name="Detter J.C."/>
            <person name="Han C."/>
            <person name="Larimer F."/>
            <person name="Land M."/>
            <person name="Hauser L."/>
            <person name="Kyrpides N."/>
            <person name="Ovchinnikova G."/>
            <person name="Bryant D.A."/>
            <person name="Richardson P."/>
        </authorList>
    </citation>
    <scope>NUCLEOTIDE SEQUENCE [LARGE SCALE GENOMIC DNA]</scope>
    <source>
        <strain>ATCC 29364 / DSM 637 / Y-400-fl</strain>
    </source>
</reference>